<organism>
    <name type="scientific">Glaesserella parasuis</name>
    <name type="common">Haemophilus parasuis</name>
    <dbReference type="NCBI Taxonomy" id="738"/>
    <lineage>
        <taxon>Bacteria</taxon>
        <taxon>Pseudomonadati</taxon>
        <taxon>Pseudomonadota</taxon>
        <taxon>Gammaproteobacteria</taxon>
        <taxon>Pasteurellales</taxon>
        <taxon>Pasteurellaceae</taxon>
        <taxon>Glaesserella</taxon>
    </lineage>
</organism>
<reference key="1">
    <citation type="journal article" date="1995" name="J. Vet. Med. B">
        <title>Isolation of the major outer-membrane protein of Actinobacillus pleuropneumoniae and Haemophilus parasuis.</title>
        <authorList>
            <person name="Hartmann L."/>
            <person name="Schroeder W."/>
            <person name="Luebke-Becker A."/>
        </authorList>
    </citation>
    <scope>PROTEIN SEQUENCE</scope>
    <source>
        <strain>A493</strain>
    </source>
</reference>
<reference key="2">
    <citation type="thesis" date="2004" institute="Iowa State University" country="United States">
        <title>The identification and characterization of P5 and P2 colonization proteins in Haemophilus parasuis and the targeted binding of carcinoembryonic antigen (CEA).</title>
        <authorList>
            <person name="McVicker J.K."/>
        </authorList>
    </citation>
    <scope>PROTEIN SEQUENCE OF 1-11</scope>
    <scope>FUNCTION</scope>
    <source>
        <strain>SW114</strain>
        <strain>SW140</strain>
    </source>
</reference>
<protein>
    <recommendedName>
        <fullName>Outer membrane protein P2</fullName>
    </recommendedName>
    <alternativeName>
        <fullName>Major outer membrane protein</fullName>
        <shortName>MOMP</shortName>
    </alternativeName>
</protein>
<accession>P80369</accession>
<keyword id="KW-0998">Cell outer membrane</keyword>
<keyword id="KW-0903">Direct protein sequencing</keyword>
<keyword id="KW-1015">Disulfide bond</keyword>
<keyword id="KW-0406">Ion transport</keyword>
<keyword id="KW-0472">Membrane</keyword>
<keyword id="KW-0626">Porin</keyword>
<keyword id="KW-0812">Transmembrane</keyword>
<keyword id="KW-1134">Transmembrane beta strand</keyword>
<keyword id="KW-0813">Transport</keyword>
<comment type="function">
    <text evidence="1">Structural rigidity of the outer membrane of elementary bodies and porin forming, permitting diffusion of solutes through the intracellular reticulate body membrane. Binds carcinoembryonic antigen (CEA).</text>
</comment>
<comment type="subunit">
    <text>Disulfide bond interactions within and between MOMP molecules and other components form high molecular-weight oligomers.</text>
</comment>
<comment type="subcellular location">
    <subcellularLocation>
        <location>Cell outer membrane</location>
        <topology>Multi-pass membrane protein</topology>
    </subcellularLocation>
</comment>
<name>OMP2_GLAPU</name>
<proteinExistence type="evidence at protein level"/>
<sequence>VTVYENEGTKVDFDGNLRLLL</sequence>
<dbReference type="GO" id="GO:0009279">
    <property type="term" value="C:cell outer membrane"/>
    <property type="evidence" value="ECO:0007669"/>
    <property type="project" value="UniProtKB-SubCell"/>
</dbReference>
<dbReference type="GO" id="GO:0046930">
    <property type="term" value="C:pore complex"/>
    <property type="evidence" value="ECO:0007669"/>
    <property type="project" value="UniProtKB-KW"/>
</dbReference>
<dbReference type="GO" id="GO:0015288">
    <property type="term" value="F:porin activity"/>
    <property type="evidence" value="ECO:0007669"/>
    <property type="project" value="UniProtKB-KW"/>
</dbReference>
<dbReference type="GO" id="GO:0006811">
    <property type="term" value="P:monoatomic ion transport"/>
    <property type="evidence" value="ECO:0007669"/>
    <property type="project" value="UniProtKB-KW"/>
</dbReference>
<feature type="chain" id="PRO_0000198027" description="Outer membrane protein P2">
    <location>
        <begin position="1"/>
        <end position="21" status="greater than"/>
    </location>
</feature>
<feature type="sequence conflict" description="In Ref. 2; AA sequence." evidence="2" ref="2">
    <original>V</original>
    <variation>A</variation>
    <location>
        <position position="1"/>
    </location>
</feature>
<feature type="non-terminal residue">
    <location>
        <position position="21"/>
    </location>
</feature>
<evidence type="ECO:0000269" key="1">
    <source ref="2"/>
</evidence>
<evidence type="ECO:0000305" key="2"/>